<protein>
    <recommendedName>
        <fullName>Coiled-coil domain-containing protein 90B, mitochondrial</fullName>
    </recommendedName>
</protein>
<sequence>MKGSQLYRHLSLQGNRLHLHLFQGKKLQLHPSQGHKGTAHRTWKKGFATSAALPAGYDVRQVEITPLEQRKLTFDTHALVRELETHGFDKVQAETIVSALATLTNASIDTVYRDMVTRAQQEITVQQIMAHLDSIRKDMVILEKSEFATLRAENEKMKIELEHVRQHLLNETNRISADAKLDMNLERSRLTDLFTEQEKKLMEASTEFHKKNATTDSVITEINKKIDIDIASLKTLMESHKLDTVRYMAASVFTCLAIALGFYRLWK</sequence>
<evidence type="ECO:0000250" key="1">
    <source>
        <dbReference type="UniProtKB" id="Q9GZT6"/>
    </source>
</evidence>
<evidence type="ECO:0000255" key="2"/>
<evidence type="ECO:0000305" key="3"/>
<organism>
    <name type="scientific">Xenopus tropicalis</name>
    <name type="common">Western clawed frog</name>
    <name type="synonym">Silurana tropicalis</name>
    <dbReference type="NCBI Taxonomy" id="8364"/>
    <lineage>
        <taxon>Eukaryota</taxon>
        <taxon>Metazoa</taxon>
        <taxon>Chordata</taxon>
        <taxon>Craniata</taxon>
        <taxon>Vertebrata</taxon>
        <taxon>Euteleostomi</taxon>
        <taxon>Amphibia</taxon>
        <taxon>Batrachia</taxon>
        <taxon>Anura</taxon>
        <taxon>Pipoidea</taxon>
        <taxon>Pipidae</taxon>
        <taxon>Xenopodinae</taxon>
        <taxon>Xenopus</taxon>
        <taxon>Silurana</taxon>
    </lineage>
</organism>
<proteinExistence type="evidence at transcript level"/>
<dbReference type="EMBL" id="DN013003">
    <property type="status" value="NOT_ANNOTATED_CDS"/>
    <property type="molecule type" value="mRNA"/>
</dbReference>
<dbReference type="EMBL" id="BC075296">
    <property type="protein sequence ID" value="AAH75296.1"/>
    <property type="status" value="ALT_FRAME"/>
    <property type="molecule type" value="mRNA"/>
</dbReference>
<dbReference type="RefSeq" id="NP_001004892.1">
    <property type="nucleotide sequence ID" value="NM_001004892.1"/>
</dbReference>
<dbReference type="RefSeq" id="XP_012812183.1">
    <property type="nucleotide sequence ID" value="XM_012956729.3"/>
</dbReference>
<dbReference type="SMR" id="Q6DJ87"/>
<dbReference type="FunCoup" id="Q6DJ87">
    <property type="interactions" value="1832"/>
</dbReference>
<dbReference type="STRING" id="8364.ENSXETP00000024354"/>
<dbReference type="PaxDb" id="8364-ENSXETP00000029870"/>
<dbReference type="DNASU" id="448234"/>
<dbReference type="GeneID" id="448234"/>
<dbReference type="KEGG" id="xtr:448234"/>
<dbReference type="AGR" id="Xenbase:XB-GENE-947820"/>
<dbReference type="CTD" id="60492"/>
<dbReference type="Xenbase" id="XB-GENE-947820">
    <property type="gene designation" value="ccdc90b"/>
</dbReference>
<dbReference type="eggNOG" id="KOG3156">
    <property type="taxonomic scope" value="Eukaryota"/>
</dbReference>
<dbReference type="InParanoid" id="Q6DJ87"/>
<dbReference type="OrthoDB" id="889336at2759"/>
<dbReference type="Proteomes" id="UP000008143">
    <property type="component" value="Chromosome 2"/>
</dbReference>
<dbReference type="GO" id="GO:0031966">
    <property type="term" value="C:mitochondrial membrane"/>
    <property type="evidence" value="ECO:0007669"/>
    <property type="project" value="UniProtKB-SubCell"/>
</dbReference>
<dbReference type="FunFam" id="1.20.5.340:FF:000015">
    <property type="entry name" value="Mitochondrial calcium uniporter regulator 1"/>
    <property type="match status" value="1"/>
</dbReference>
<dbReference type="Gene3D" id="1.20.5.340">
    <property type="match status" value="1"/>
</dbReference>
<dbReference type="InterPro" id="IPR024461">
    <property type="entry name" value="CCDC90-like"/>
</dbReference>
<dbReference type="PANTHER" id="PTHR14360:SF14">
    <property type="entry name" value="COILED-COIL DOMAIN-CONTAINING PROTEIN 90B, MITOCHONDRIAL"/>
    <property type="match status" value="1"/>
</dbReference>
<dbReference type="PANTHER" id="PTHR14360">
    <property type="entry name" value="PROTEIN FMP32, MITOCHONDRIAL"/>
    <property type="match status" value="1"/>
</dbReference>
<dbReference type="Pfam" id="PF07798">
    <property type="entry name" value="CCDC90-like"/>
    <property type="match status" value="1"/>
</dbReference>
<reference key="1">
    <citation type="submission" date="2004-06" db="EMBL/GenBank/DDBJ databases">
        <authorList>
            <consortium name="NIH - Xenopus Gene Collection (XGC) project"/>
        </authorList>
    </citation>
    <scope>NUCLEOTIDE SEQUENCE [LARGE SCALE MRNA]</scope>
    <scope>NUCLEOTIDE SEQUENCE [LARGE SCALE MRNA] OF 102-267</scope>
</reference>
<comment type="subcellular location">
    <subcellularLocation>
        <location evidence="1">Mitochondrion membrane</location>
        <topology evidence="2">Single-pass membrane protein</topology>
    </subcellularLocation>
</comment>
<comment type="similarity">
    <text evidence="3">Belongs to the CCDC90 family.</text>
</comment>
<comment type="sequence caution" evidence="3">
    <conflict type="frameshift">
        <sequence resource="EMBL-CDS" id="AAH75296"/>
    </conflict>
</comment>
<gene>
    <name type="primary">ccdc90b</name>
</gene>
<feature type="transit peptide" description="Mitochondrion" evidence="2">
    <location>
        <begin position="1"/>
        <end position="47"/>
    </location>
</feature>
<feature type="chain" id="PRO_0000295698" description="Coiled-coil domain-containing protein 90B, mitochondrial">
    <location>
        <begin position="48"/>
        <end position="267"/>
    </location>
</feature>
<feature type="transmembrane region" description="Helical" evidence="2">
    <location>
        <begin position="244"/>
        <end position="266"/>
    </location>
</feature>
<feature type="coiled-coil region" evidence="2">
    <location>
        <begin position="142"/>
        <end position="175"/>
    </location>
</feature>
<keyword id="KW-0175">Coiled coil</keyword>
<keyword id="KW-0472">Membrane</keyword>
<keyword id="KW-0496">Mitochondrion</keyword>
<keyword id="KW-1185">Reference proteome</keyword>
<keyword id="KW-0809">Transit peptide</keyword>
<keyword id="KW-0812">Transmembrane</keyword>
<keyword id="KW-1133">Transmembrane helix</keyword>
<accession>Q6DJ87</accession>
<name>CC90B_XENTR</name>